<sequence>MSLLTQTINHIGPLDDQAATAARRRQDMLTKPAGSLGRLEELSIRIAGITGRERPRLTKPAVIVMAADHGVARQGVSAFPAEVTPQMVLNFLRGGAAINVLARHVGAQVIVVDIGVAADLPSHPELVSRKLAYGTADFSQEPAMSRDLAQQAIEVGITCANEAIDSGVDLLATGEMGIANTTAASAVVAAITGRPVAEVTGRGTGIDDASLARKIAVIERALVLHQPNPRDGLDVLAKVGGLEIGGLAGVILGAAARRVPVVIDGFISGAAALIAATLAPAAVNYMIAGHRSVERGHAAVFDRLDLKPLLDLDMRLGEGTGAVLAMSLCQAACKVLDEMATFAEAGVSEKKEA</sequence>
<comment type="function">
    <text evidence="1">Catalyzes the synthesis of alpha-ribazole-5'-phosphate from nicotinate mononucleotide (NAMN) and 5,6-dimethylbenzimidazole (DMB).</text>
</comment>
<comment type="catalytic activity">
    <reaction evidence="1">
        <text>5,6-dimethylbenzimidazole + nicotinate beta-D-ribonucleotide = alpha-ribazole 5'-phosphate + nicotinate + H(+)</text>
        <dbReference type="Rhea" id="RHEA:11196"/>
        <dbReference type="ChEBI" id="CHEBI:15378"/>
        <dbReference type="ChEBI" id="CHEBI:15890"/>
        <dbReference type="ChEBI" id="CHEBI:32544"/>
        <dbReference type="ChEBI" id="CHEBI:57502"/>
        <dbReference type="ChEBI" id="CHEBI:57918"/>
        <dbReference type="EC" id="2.4.2.21"/>
    </reaction>
</comment>
<comment type="pathway">
    <text evidence="1">Nucleoside biosynthesis; alpha-ribazole biosynthesis; alpha-ribazole from 5,6-dimethylbenzimidazole: step 1/2.</text>
</comment>
<comment type="similarity">
    <text evidence="1">Belongs to the CobT family.</text>
</comment>
<dbReference type="EC" id="2.4.2.21" evidence="1"/>
<dbReference type="EMBL" id="CP001337">
    <property type="protein sequence ID" value="ACL24185.1"/>
    <property type="molecule type" value="Genomic_DNA"/>
</dbReference>
<dbReference type="RefSeq" id="WP_012616549.1">
    <property type="nucleotide sequence ID" value="NC_011831.1"/>
</dbReference>
<dbReference type="SMR" id="B8G806"/>
<dbReference type="STRING" id="326427.Cagg_1277"/>
<dbReference type="KEGG" id="cag:Cagg_1277"/>
<dbReference type="eggNOG" id="COG2038">
    <property type="taxonomic scope" value="Bacteria"/>
</dbReference>
<dbReference type="HOGENOM" id="CLU_002982_0_0_0"/>
<dbReference type="OrthoDB" id="9781491at2"/>
<dbReference type="UniPathway" id="UPA00061">
    <property type="reaction ID" value="UER00516"/>
</dbReference>
<dbReference type="Proteomes" id="UP000002508">
    <property type="component" value="Chromosome"/>
</dbReference>
<dbReference type="GO" id="GO:0008939">
    <property type="term" value="F:nicotinate-nucleotide-dimethylbenzimidazole phosphoribosyltransferase activity"/>
    <property type="evidence" value="ECO:0007669"/>
    <property type="project" value="UniProtKB-UniRule"/>
</dbReference>
<dbReference type="GO" id="GO:0009236">
    <property type="term" value="P:cobalamin biosynthetic process"/>
    <property type="evidence" value="ECO:0007669"/>
    <property type="project" value="UniProtKB-KW"/>
</dbReference>
<dbReference type="CDD" id="cd02439">
    <property type="entry name" value="DMB-PRT_CobT"/>
    <property type="match status" value="1"/>
</dbReference>
<dbReference type="FunFam" id="3.40.50.10210:FF:000001">
    <property type="entry name" value="Nicotinate-nucleotide--dimethylbenzimidazole phosphoribosyltransferase"/>
    <property type="match status" value="1"/>
</dbReference>
<dbReference type="Gene3D" id="1.10.1610.10">
    <property type="match status" value="1"/>
</dbReference>
<dbReference type="Gene3D" id="3.40.50.10210">
    <property type="match status" value="1"/>
</dbReference>
<dbReference type="HAMAP" id="MF_00230">
    <property type="entry name" value="CobT"/>
    <property type="match status" value="1"/>
</dbReference>
<dbReference type="InterPro" id="IPR003200">
    <property type="entry name" value="Nict_dMeBzImd_PRibTrfase"/>
</dbReference>
<dbReference type="InterPro" id="IPR017846">
    <property type="entry name" value="Nict_dMeBzImd_PRibTrfase_bact"/>
</dbReference>
<dbReference type="InterPro" id="IPR023195">
    <property type="entry name" value="Nict_dMeBzImd_PRibTrfase_N"/>
</dbReference>
<dbReference type="InterPro" id="IPR036087">
    <property type="entry name" value="Nict_dMeBzImd_PRibTrfase_sf"/>
</dbReference>
<dbReference type="NCBIfam" id="TIGR03160">
    <property type="entry name" value="cobT_DBIPRT"/>
    <property type="match status" value="1"/>
</dbReference>
<dbReference type="NCBIfam" id="NF000996">
    <property type="entry name" value="PRK00105.1"/>
    <property type="match status" value="1"/>
</dbReference>
<dbReference type="PANTHER" id="PTHR43463">
    <property type="entry name" value="NICOTINATE-NUCLEOTIDE--DIMETHYLBENZIMIDAZOLE PHOSPHORIBOSYLTRANSFERASE"/>
    <property type="match status" value="1"/>
</dbReference>
<dbReference type="PANTHER" id="PTHR43463:SF1">
    <property type="entry name" value="NICOTINATE-NUCLEOTIDE--DIMETHYLBENZIMIDAZOLE PHOSPHORIBOSYLTRANSFERASE"/>
    <property type="match status" value="1"/>
</dbReference>
<dbReference type="Pfam" id="PF02277">
    <property type="entry name" value="DBI_PRT"/>
    <property type="match status" value="1"/>
</dbReference>
<dbReference type="SUPFAM" id="SSF52733">
    <property type="entry name" value="Nicotinate mononucleotide:5,6-dimethylbenzimidazole phosphoribosyltransferase (CobT)"/>
    <property type="match status" value="1"/>
</dbReference>
<reference key="1">
    <citation type="submission" date="2008-12" db="EMBL/GenBank/DDBJ databases">
        <title>Complete sequence of Chloroflexus aggregans DSM 9485.</title>
        <authorList>
            <consortium name="US DOE Joint Genome Institute"/>
            <person name="Lucas S."/>
            <person name="Copeland A."/>
            <person name="Lapidus A."/>
            <person name="Glavina del Rio T."/>
            <person name="Dalin E."/>
            <person name="Tice H."/>
            <person name="Pitluck S."/>
            <person name="Foster B."/>
            <person name="Larimer F."/>
            <person name="Land M."/>
            <person name="Hauser L."/>
            <person name="Kyrpides N."/>
            <person name="Mikhailova N."/>
            <person name="Bryant D.A."/>
            <person name="Richardson P."/>
        </authorList>
    </citation>
    <scope>NUCLEOTIDE SEQUENCE [LARGE SCALE GENOMIC DNA]</scope>
    <source>
        <strain>MD-66 / DSM 9485</strain>
    </source>
</reference>
<organism>
    <name type="scientific">Chloroflexus aggregans (strain MD-66 / DSM 9485)</name>
    <dbReference type="NCBI Taxonomy" id="326427"/>
    <lineage>
        <taxon>Bacteria</taxon>
        <taxon>Bacillati</taxon>
        <taxon>Chloroflexota</taxon>
        <taxon>Chloroflexia</taxon>
        <taxon>Chloroflexales</taxon>
        <taxon>Chloroflexineae</taxon>
        <taxon>Chloroflexaceae</taxon>
        <taxon>Chloroflexus</taxon>
    </lineage>
</organism>
<gene>
    <name evidence="1" type="primary">cobT</name>
    <name type="ordered locus">Cagg_1277</name>
</gene>
<feature type="chain" id="PRO_1000125101" description="Nicotinate-nucleotide--dimethylbenzimidazole phosphoribosyltransferase">
    <location>
        <begin position="1"/>
        <end position="353"/>
    </location>
</feature>
<feature type="active site" description="Proton acceptor" evidence="1">
    <location>
        <position position="318"/>
    </location>
</feature>
<keyword id="KW-0169">Cobalamin biosynthesis</keyword>
<keyword id="KW-0328">Glycosyltransferase</keyword>
<keyword id="KW-0808">Transferase</keyword>
<name>COBT_CHLAD</name>
<evidence type="ECO:0000255" key="1">
    <source>
        <dbReference type="HAMAP-Rule" id="MF_00230"/>
    </source>
</evidence>
<protein>
    <recommendedName>
        <fullName evidence="1">Nicotinate-nucleotide--dimethylbenzimidazole phosphoribosyltransferase</fullName>
        <shortName evidence="1">NN:DBI PRT</shortName>
        <ecNumber evidence="1">2.4.2.21</ecNumber>
    </recommendedName>
    <alternativeName>
        <fullName evidence="1">N(1)-alpha-phosphoribosyltransferase</fullName>
    </alternativeName>
</protein>
<proteinExistence type="inferred from homology"/>
<accession>B8G806</accession>